<proteinExistence type="evidence at protein level"/>
<feature type="chain" id="PRO_0000052930" description="Hemoglobin subunit beta">
    <location>
        <begin position="1"/>
        <end position="146"/>
    </location>
</feature>
<feature type="domain" description="Globin" evidence="3">
    <location>
        <begin position="2"/>
        <end position="146"/>
    </location>
</feature>
<feature type="binding site" description="distal binding residue">
    <location>
        <position position="63"/>
    </location>
    <ligand>
        <name>heme b</name>
        <dbReference type="ChEBI" id="CHEBI:60344"/>
    </ligand>
    <ligandPart>
        <name>Fe</name>
        <dbReference type="ChEBI" id="CHEBI:18248"/>
    </ligandPart>
</feature>
<feature type="binding site" description="proximal binding residue">
    <location>
        <position position="92"/>
    </location>
    <ligand>
        <name>heme b</name>
        <dbReference type="ChEBI" id="CHEBI:60344"/>
    </ligand>
    <ligandPart>
        <name>Fe</name>
        <dbReference type="ChEBI" id="CHEBI:18248"/>
    </ligandPart>
</feature>
<feature type="modified residue" description="N-acetylvaline" evidence="1">
    <location>
        <position position="1"/>
    </location>
</feature>
<feature type="modified residue" description="Phosphothreonine" evidence="2">
    <location>
        <position position="12"/>
    </location>
</feature>
<feature type="modified residue" description="Phosphoserine" evidence="2">
    <location>
        <position position="44"/>
    </location>
</feature>
<feature type="modified residue" description="N6-acetyllysine" evidence="2">
    <location>
        <position position="59"/>
    </location>
</feature>
<feature type="modified residue" description="N6-acetyllysine" evidence="2">
    <location>
        <position position="82"/>
    </location>
</feature>
<feature type="modified residue" description="S-nitrosocysteine" evidence="2">
    <location>
        <position position="93"/>
    </location>
</feature>
<feature type="modified residue" description="N6-acetyllysine" evidence="2">
    <location>
        <position position="144"/>
    </location>
</feature>
<reference key="1">
    <citation type="thesis" date="1973" institute="University of London" country="United Kingdom">
        <title>Structural studies of Old World monkey haemoglobins in relation to phylogeny.</title>
        <authorList>
            <person name="Hewett-Emmett D."/>
        </authorList>
    </citation>
    <scope>PROTEIN SEQUENCE</scope>
</reference>
<keyword id="KW-0007">Acetylation</keyword>
<keyword id="KW-0903">Direct protein sequencing</keyword>
<keyword id="KW-0349">Heme</keyword>
<keyword id="KW-0408">Iron</keyword>
<keyword id="KW-0479">Metal-binding</keyword>
<keyword id="KW-0561">Oxygen transport</keyword>
<keyword id="KW-0597">Phosphoprotein</keyword>
<keyword id="KW-0702">S-nitrosylation</keyword>
<keyword id="KW-0813">Transport</keyword>
<name>HBB_PILBA</name>
<gene>
    <name type="primary">HBB</name>
</gene>
<protein>
    <recommendedName>
        <fullName>Hemoglobin subunit beta</fullName>
    </recommendedName>
    <alternativeName>
        <fullName>Beta-globin</fullName>
    </alternativeName>
    <alternativeName>
        <fullName>Hemoglobin beta chain</fullName>
    </alternativeName>
</protein>
<organism>
    <name type="scientific">Piliocolobus badius</name>
    <name type="common">Western red colobus</name>
    <name type="synonym">Procolobus badius</name>
    <dbReference type="NCBI Taxonomy" id="164648"/>
    <lineage>
        <taxon>Eukaryota</taxon>
        <taxon>Metazoa</taxon>
        <taxon>Chordata</taxon>
        <taxon>Craniata</taxon>
        <taxon>Vertebrata</taxon>
        <taxon>Euteleostomi</taxon>
        <taxon>Mammalia</taxon>
        <taxon>Eutheria</taxon>
        <taxon>Euarchontoglires</taxon>
        <taxon>Primates</taxon>
        <taxon>Haplorrhini</taxon>
        <taxon>Catarrhini</taxon>
        <taxon>Cercopithecidae</taxon>
        <taxon>Colobinae</taxon>
        <taxon>Piliocolobus</taxon>
    </lineage>
</organism>
<comment type="function">
    <text>Involved in oxygen transport from the lung to the various peripheral tissues.</text>
</comment>
<comment type="subunit">
    <text>Heterotetramer of two alpha chains and two beta chains.</text>
</comment>
<comment type="tissue specificity">
    <text>Red blood cells.</text>
</comment>
<comment type="similarity">
    <text evidence="3">Belongs to the globin family.</text>
</comment>
<accession>P02033</accession>
<sequence length="146" mass="15870">VHLTPDEKNAVTALWGKVNVDEVGGEALGRLLVVYPWTQRFFDSFGDLSTADAVMGNPKVKAHGKKVLGAFSDGLAHLDNLKGTFAQLSELHCDKLHVDPENFKLLGNVLVCVLAHHFGKEFTPQVQAAYQKVVAGVANALAHKYH</sequence>
<dbReference type="PIR" id="B04620">
    <property type="entry name" value="HBMQB"/>
</dbReference>
<dbReference type="SMR" id="P02033"/>
<dbReference type="GO" id="GO:0072562">
    <property type="term" value="C:blood microparticle"/>
    <property type="evidence" value="ECO:0007669"/>
    <property type="project" value="TreeGrafter"/>
</dbReference>
<dbReference type="GO" id="GO:0031838">
    <property type="term" value="C:haptoglobin-hemoglobin complex"/>
    <property type="evidence" value="ECO:0007669"/>
    <property type="project" value="TreeGrafter"/>
</dbReference>
<dbReference type="GO" id="GO:0005833">
    <property type="term" value="C:hemoglobin complex"/>
    <property type="evidence" value="ECO:0007669"/>
    <property type="project" value="InterPro"/>
</dbReference>
<dbReference type="GO" id="GO:0031720">
    <property type="term" value="F:haptoglobin binding"/>
    <property type="evidence" value="ECO:0007669"/>
    <property type="project" value="TreeGrafter"/>
</dbReference>
<dbReference type="GO" id="GO:0020037">
    <property type="term" value="F:heme binding"/>
    <property type="evidence" value="ECO:0007669"/>
    <property type="project" value="InterPro"/>
</dbReference>
<dbReference type="GO" id="GO:0031721">
    <property type="term" value="F:hemoglobin alpha binding"/>
    <property type="evidence" value="ECO:0007669"/>
    <property type="project" value="TreeGrafter"/>
</dbReference>
<dbReference type="GO" id="GO:0046872">
    <property type="term" value="F:metal ion binding"/>
    <property type="evidence" value="ECO:0007669"/>
    <property type="project" value="UniProtKB-KW"/>
</dbReference>
<dbReference type="GO" id="GO:0043177">
    <property type="term" value="F:organic acid binding"/>
    <property type="evidence" value="ECO:0007669"/>
    <property type="project" value="TreeGrafter"/>
</dbReference>
<dbReference type="GO" id="GO:0019825">
    <property type="term" value="F:oxygen binding"/>
    <property type="evidence" value="ECO:0007669"/>
    <property type="project" value="InterPro"/>
</dbReference>
<dbReference type="GO" id="GO:0005344">
    <property type="term" value="F:oxygen carrier activity"/>
    <property type="evidence" value="ECO:0007669"/>
    <property type="project" value="UniProtKB-KW"/>
</dbReference>
<dbReference type="GO" id="GO:0004601">
    <property type="term" value="F:peroxidase activity"/>
    <property type="evidence" value="ECO:0007669"/>
    <property type="project" value="TreeGrafter"/>
</dbReference>
<dbReference type="GO" id="GO:0042744">
    <property type="term" value="P:hydrogen peroxide catabolic process"/>
    <property type="evidence" value="ECO:0007669"/>
    <property type="project" value="TreeGrafter"/>
</dbReference>
<dbReference type="CDD" id="cd08925">
    <property type="entry name" value="Hb-beta-like"/>
    <property type="match status" value="1"/>
</dbReference>
<dbReference type="FunFam" id="1.10.490.10:FF:000001">
    <property type="entry name" value="Hemoglobin subunit beta"/>
    <property type="match status" value="1"/>
</dbReference>
<dbReference type="Gene3D" id="1.10.490.10">
    <property type="entry name" value="Globins"/>
    <property type="match status" value="1"/>
</dbReference>
<dbReference type="InterPro" id="IPR000971">
    <property type="entry name" value="Globin"/>
</dbReference>
<dbReference type="InterPro" id="IPR009050">
    <property type="entry name" value="Globin-like_sf"/>
</dbReference>
<dbReference type="InterPro" id="IPR012292">
    <property type="entry name" value="Globin/Proto"/>
</dbReference>
<dbReference type="InterPro" id="IPR002337">
    <property type="entry name" value="Hemoglobin_b"/>
</dbReference>
<dbReference type="InterPro" id="IPR050056">
    <property type="entry name" value="Hemoglobin_oxygen_transport"/>
</dbReference>
<dbReference type="PANTHER" id="PTHR11442">
    <property type="entry name" value="HEMOGLOBIN FAMILY MEMBER"/>
    <property type="match status" value="1"/>
</dbReference>
<dbReference type="PANTHER" id="PTHR11442:SF42">
    <property type="entry name" value="HEMOGLOBIN SUBUNIT BETA"/>
    <property type="match status" value="1"/>
</dbReference>
<dbReference type="Pfam" id="PF00042">
    <property type="entry name" value="Globin"/>
    <property type="match status" value="1"/>
</dbReference>
<dbReference type="PRINTS" id="PR00814">
    <property type="entry name" value="BETAHAEM"/>
</dbReference>
<dbReference type="SUPFAM" id="SSF46458">
    <property type="entry name" value="Globin-like"/>
    <property type="match status" value="1"/>
</dbReference>
<dbReference type="PROSITE" id="PS01033">
    <property type="entry name" value="GLOBIN"/>
    <property type="match status" value="1"/>
</dbReference>
<evidence type="ECO:0000250" key="1">
    <source>
        <dbReference type="UniProtKB" id="P02086"/>
    </source>
</evidence>
<evidence type="ECO:0000250" key="2">
    <source>
        <dbReference type="UniProtKB" id="P68871"/>
    </source>
</evidence>
<evidence type="ECO:0000255" key="3">
    <source>
        <dbReference type="PROSITE-ProRule" id="PRU00238"/>
    </source>
</evidence>